<name>PDI_RICCO</name>
<accession>Q43116</accession>
<protein>
    <recommendedName>
        <fullName>Protein disulfide-isomerase</fullName>
        <shortName>PDI</shortName>
        <ecNumber>5.3.4.1</ecNumber>
    </recommendedName>
</protein>
<reference key="1">
    <citation type="journal article" date="1996" name="Eur. J. Biochem.">
        <title>Molecular characterisation of plant endoplasmic reticulum. Identification of protein disulfide-isomerase as the major reticuloplasmin.</title>
        <authorList>
            <person name="Coughlan S.J."/>
            <person name="Hastings C."/>
            <person name="Winfrey R.J."/>
        </authorList>
    </citation>
    <scope>NUCLEOTIDE SEQUENCE [MRNA]</scope>
    <source>
        <strain>cv. Hale</strain>
    </source>
</reference>
<organism>
    <name type="scientific">Ricinus communis</name>
    <name type="common">Castor bean</name>
    <dbReference type="NCBI Taxonomy" id="3988"/>
    <lineage>
        <taxon>Eukaryota</taxon>
        <taxon>Viridiplantae</taxon>
        <taxon>Streptophyta</taxon>
        <taxon>Embryophyta</taxon>
        <taxon>Tracheophyta</taxon>
        <taxon>Spermatophyta</taxon>
        <taxon>Magnoliopsida</taxon>
        <taxon>eudicotyledons</taxon>
        <taxon>Gunneridae</taxon>
        <taxon>Pentapetalae</taxon>
        <taxon>rosids</taxon>
        <taxon>fabids</taxon>
        <taxon>Malpighiales</taxon>
        <taxon>Euphorbiaceae</taxon>
        <taxon>Acalyphoideae</taxon>
        <taxon>Acalypheae</taxon>
        <taxon>Ricinus</taxon>
    </lineage>
</organism>
<comment type="function">
    <text evidence="1">Participates in the folding of proteins containing disulfide bonds, may be involved in glycosylation, prolyl hydroxylation and triglyceride transfer.</text>
</comment>
<comment type="catalytic activity">
    <reaction>
        <text>Catalyzes the rearrangement of -S-S- bonds in proteins.</text>
        <dbReference type="EC" id="5.3.4.1"/>
    </reaction>
</comment>
<comment type="subcellular location">
    <subcellularLocation>
        <location evidence="4">Endoplasmic reticulum lumen</location>
    </subcellularLocation>
</comment>
<comment type="similarity">
    <text evidence="5">Belongs to the protein disulfide isomerase family.</text>
</comment>
<sequence length="498" mass="55561">MASFRGSIWYCIFVLSLIAVAISAAESEEEQSSVLTLDSTNFTDTISKHDFIVVEFYAPWCGHCKKLRPEYEKAASILKSHDIPVVLAKVDANEEANKELATQYDIKGFPTLKILRNGGKSIQEYKGPREADGIAEYLKKQSGPASVEIKSTEAANTFIGDKKIFIVGVFPKFSGEEYENYMSVADKLRSDYEFGHTLDAKHLPQGESSVTGPVVRLFKPFDELFVDFKDFNVDALEKFVEESSMPVVTVFNSDPSNHPFVIKFFNSPDAKAMLFMNFNGEAADSIKSKYQEVAHQFKGEGIILLLGDVEASQGAFQYFGLKEDQVPLIIIQTNDGQKYLKANLEPDHIAPWVKAYKEGKVQAYRKSEPIPEVNNEPVKVVVADTLQDIVFNSGKNVLLEFYAPWCGHCKQLAPILDEVAVSYKSDADIVIAKLDATANDIPSDTFDVRGYPTVYFRSASGKVEQYDGDRTKDDIISFIEKNRDKAAQQESANGKDEL</sequence>
<proteinExistence type="evidence at transcript level"/>
<dbReference type="EC" id="5.3.4.1"/>
<dbReference type="EMBL" id="U41385">
    <property type="protein sequence ID" value="AAB05641.1"/>
    <property type="molecule type" value="mRNA"/>
</dbReference>
<dbReference type="PIR" id="S62626">
    <property type="entry name" value="S62626"/>
</dbReference>
<dbReference type="RefSeq" id="NP_001310686.1">
    <property type="nucleotide sequence ID" value="NM_001323757.1"/>
</dbReference>
<dbReference type="SMR" id="Q43116"/>
<dbReference type="GeneID" id="8281065"/>
<dbReference type="KEGG" id="rcu:8281065"/>
<dbReference type="eggNOG" id="KOG0190">
    <property type="taxonomic scope" value="Eukaryota"/>
</dbReference>
<dbReference type="OMA" id="FFGMKKD"/>
<dbReference type="OrthoDB" id="427280at2759"/>
<dbReference type="GO" id="GO:0005788">
    <property type="term" value="C:endoplasmic reticulum lumen"/>
    <property type="evidence" value="ECO:0000314"/>
    <property type="project" value="UniProtKB"/>
</dbReference>
<dbReference type="GO" id="GO:0003756">
    <property type="term" value="F:protein disulfide isomerase activity"/>
    <property type="evidence" value="ECO:0007669"/>
    <property type="project" value="UniProtKB-EC"/>
</dbReference>
<dbReference type="CDD" id="cd02961">
    <property type="entry name" value="PDI_a_family"/>
    <property type="match status" value="1"/>
</dbReference>
<dbReference type="CDD" id="cd02995">
    <property type="entry name" value="PDI_a_PDI_a'_C"/>
    <property type="match status" value="1"/>
</dbReference>
<dbReference type="CDD" id="cd02982">
    <property type="entry name" value="PDI_b'_family"/>
    <property type="match status" value="1"/>
</dbReference>
<dbReference type="CDD" id="cd02981">
    <property type="entry name" value="PDI_b_family"/>
    <property type="match status" value="1"/>
</dbReference>
<dbReference type="FunFam" id="3.40.30.10:FF:000143">
    <property type="entry name" value="Protein disulfide-isomerase"/>
    <property type="match status" value="1"/>
</dbReference>
<dbReference type="FunFam" id="3.40.30.10:FF:000150">
    <property type="entry name" value="Protein disulfide-isomerase"/>
    <property type="match status" value="1"/>
</dbReference>
<dbReference type="FunFam" id="3.40.30.10:FF:000152">
    <property type="entry name" value="Protein disulfide-isomerase"/>
    <property type="match status" value="1"/>
</dbReference>
<dbReference type="FunFam" id="3.40.30.10:FF:000184">
    <property type="entry name" value="Protein disulfide-isomerase"/>
    <property type="match status" value="1"/>
</dbReference>
<dbReference type="Gene3D" id="3.40.30.10">
    <property type="entry name" value="Glutaredoxin"/>
    <property type="match status" value="4"/>
</dbReference>
<dbReference type="InterPro" id="IPR005788">
    <property type="entry name" value="PDI_thioredoxin-like_dom"/>
</dbReference>
<dbReference type="InterPro" id="IPR005792">
    <property type="entry name" value="Prot_disulphide_isomerase"/>
</dbReference>
<dbReference type="InterPro" id="IPR036249">
    <property type="entry name" value="Thioredoxin-like_sf"/>
</dbReference>
<dbReference type="InterPro" id="IPR017937">
    <property type="entry name" value="Thioredoxin_CS"/>
</dbReference>
<dbReference type="InterPro" id="IPR013766">
    <property type="entry name" value="Thioredoxin_domain"/>
</dbReference>
<dbReference type="NCBIfam" id="TIGR01130">
    <property type="entry name" value="ER_PDI_fam"/>
    <property type="match status" value="1"/>
</dbReference>
<dbReference type="NCBIfam" id="TIGR01126">
    <property type="entry name" value="pdi_dom"/>
    <property type="match status" value="2"/>
</dbReference>
<dbReference type="PANTHER" id="PTHR18929">
    <property type="entry name" value="PROTEIN DISULFIDE ISOMERASE"/>
    <property type="match status" value="1"/>
</dbReference>
<dbReference type="PANTHER" id="PTHR18929:SF132">
    <property type="entry name" value="PROTEIN DISULFIDE-ISOMERASE A3"/>
    <property type="match status" value="1"/>
</dbReference>
<dbReference type="Pfam" id="PF00085">
    <property type="entry name" value="Thioredoxin"/>
    <property type="match status" value="2"/>
</dbReference>
<dbReference type="Pfam" id="PF13848">
    <property type="entry name" value="Thioredoxin_6"/>
    <property type="match status" value="1"/>
</dbReference>
<dbReference type="PRINTS" id="PR00421">
    <property type="entry name" value="THIOREDOXIN"/>
</dbReference>
<dbReference type="SUPFAM" id="SSF52833">
    <property type="entry name" value="Thioredoxin-like"/>
    <property type="match status" value="4"/>
</dbReference>
<dbReference type="PROSITE" id="PS00014">
    <property type="entry name" value="ER_TARGET"/>
    <property type="match status" value="1"/>
</dbReference>
<dbReference type="PROSITE" id="PS00194">
    <property type="entry name" value="THIOREDOXIN_1"/>
    <property type="match status" value="2"/>
</dbReference>
<dbReference type="PROSITE" id="PS51352">
    <property type="entry name" value="THIOREDOXIN_2"/>
    <property type="match status" value="2"/>
</dbReference>
<evidence type="ECO:0000250" key="1"/>
<evidence type="ECO:0000255" key="2"/>
<evidence type="ECO:0000255" key="3">
    <source>
        <dbReference type="PROSITE-ProRule" id="PRU00691"/>
    </source>
</evidence>
<evidence type="ECO:0000255" key="4">
    <source>
        <dbReference type="PROSITE-ProRule" id="PRU10138"/>
    </source>
</evidence>
<evidence type="ECO:0000305" key="5"/>
<keyword id="KW-1015">Disulfide bond</keyword>
<keyword id="KW-0256">Endoplasmic reticulum</keyword>
<keyword id="KW-0325">Glycoprotein</keyword>
<keyword id="KW-0413">Isomerase</keyword>
<keyword id="KW-0676">Redox-active center</keyword>
<keyword id="KW-0677">Repeat</keyword>
<keyword id="KW-0732">Signal</keyword>
<feature type="signal peptide" evidence="2">
    <location>
        <begin position="1"/>
        <end position="23"/>
    </location>
</feature>
<feature type="chain" id="PRO_0000034211" description="Protein disulfide-isomerase">
    <location>
        <begin position="24"/>
        <end position="498"/>
    </location>
</feature>
<feature type="domain" description="Thioredoxin 1" evidence="3">
    <location>
        <begin position="24"/>
        <end position="143"/>
    </location>
</feature>
<feature type="domain" description="Thioredoxin 2" evidence="3">
    <location>
        <begin position="339"/>
        <end position="484"/>
    </location>
</feature>
<feature type="short sequence motif" description="Prevents secretion from ER" evidence="4">
    <location>
        <begin position="495"/>
        <end position="498"/>
    </location>
</feature>
<feature type="active site" description="Nucleophile" evidence="1">
    <location>
        <position position="61"/>
    </location>
</feature>
<feature type="active site" description="Nucleophile" evidence="1">
    <location>
        <position position="64"/>
    </location>
</feature>
<feature type="active site" description="Nucleophile" evidence="1">
    <location>
        <position position="406"/>
    </location>
</feature>
<feature type="active site" description="Nucleophile" evidence="1">
    <location>
        <position position="409"/>
    </location>
</feature>
<feature type="site" description="Contributes to redox potential value" evidence="1">
    <location>
        <position position="62"/>
    </location>
</feature>
<feature type="site" description="Contributes to redox potential value" evidence="1">
    <location>
        <position position="63"/>
    </location>
</feature>
<feature type="site" description="Lowers pKa of C-terminal Cys of first active site" evidence="1">
    <location>
        <position position="129"/>
    </location>
</feature>
<feature type="site" description="Contributes to redox potential value" evidence="1">
    <location>
        <position position="407"/>
    </location>
</feature>
<feature type="site" description="Contributes to redox potential value" evidence="1">
    <location>
        <position position="408"/>
    </location>
</feature>
<feature type="site" description="Lowers pKa of C-terminal Cys of second active site" evidence="1">
    <location>
        <position position="470"/>
    </location>
</feature>
<feature type="glycosylation site" description="N-linked (GlcNAc...) asparagine" evidence="2">
    <location>
        <position position="41"/>
    </location>
</feature>
<feature type="disulfide bond" description="Redox-active" evidence="3">
    <location>
        <begin position="61"/>
        <end position="64"/>
    </location>
</feature>
<feature type="disulfide bond" description="Redox-active" evidence="3">
    <location>
        <begin position="406"/>
        <end position="409"/>
    </location>
</feature>